<gene>
    <name evidence="1" type="primary">surE</name>
    <name type="ordered locus">SG0528</name>
</gene>
<proteinExistence type="inferred from homology"/>
<name>SURE_SODGM</name>
<organism>
    <name type="scientific">Sodalis glossinidius (strain morsitans)</name>
    <dbReference type="NCBI Taxonomy" id="343509"/>
    <lineage>
        <taxon>Bacteria</taxon>
        <taxon>Pseudomonadati</taxon>
        <taxon>Pseudomonadota</taxon>
        <taxon>Gammaproteobacteria</taxon>
        <taxon>Enterobacterales</taxon>
        <taxon>Bruguierivoracaceae</taxon>
        <taxon>Sodalis</taxon>
    </lineage>
</organism>
<feature type="chain" id="PRO_0000235653" description="5'/3'-nucleotidase SurE">
    <location>
        <begin position="1"/>
        <end position="253"/>
    </location>
</feature>
<feature type="binding site" evidence="1">
    <location>
        <position position="8"/>
    </location>
    <ligand>
        <name>a divalent metal cation</name>
        <dbReference type="ChEBI" id="CHEBI:60240"/>
    </ligand>
</feature>
<feature type="binding site" evidence="1">
    <location>
        <position position="9"/>
    </location>
    <ligand>
        <name>a divalent metal cation</name>
        <dbReference type="ChEBI" id="CHEBI:60240"/>
    </ligand>
</feature>
<feature type="binding site" evidence="1">
    <location>
        <position position="39"/>
    </location>
    <ligand>
        <name>a divalent metal cation</name>
        <dbReference type="ChEBI" id="CHEBI:60240"/>
    </ligand>
</feature>
<feature type="binding site" evidence="1">
    <location>
        <position position="92"/>
    </location>
    <ligand>
        <name>a divalent metal cation</name>
        <dbReference type="ChEBI" id="CHEBI:60240"/>
    </ligand>
</feature>
<dbReference type="EC" id="3.1.3.5" evidence="1"/>
<dbReference type="EC" id="3.1.3.6" evidence="1"/>
<dbReference type="EC" id="3.6.1.11" evidence="1"/>
<dbReference type="EMBL" id="AP008232">
    <property type="protein sequence ID" value="BAE73803.1"/>
    <property type="molecule type" value="Genomic_DNA"/>
</dbReference>
<dbReference type="RefSeq" id="WP_011410501.1">
    <property type="nucleotide sequence ID" value="NC_007712.1"/>
</dbReference>
<dbReference type="SMR" id="Q2NVM2"/>
<dbReference type="STRING" id="343509.SG0528"/>
<dbReference type="KEGG" id="sgl:SG0528"/>
<dbReference type="eggNOG" id="COG0496">
    <property type="taxonomic scope" value="Bacteria"/>
</dbReference>
<dbReference type="HOGENOM" id="CLU_045192_1_2_6"/>
<dbReference type="OrthoDB" id="9780815at2"/>
<dbReference type="BioCyc" id="SGLO343509:SGP1_RS04665-MONOMER"/>
<dbReference type="Proteomes" id="UP000001932">
    <property type="component" value="Chromosome"/>
</dbReference>
<dbReference type="GO" id="GO:0005737">
    <property type="term" value="C:cytoplasm"/>
    <property type="evidence" value="ECO:0007669"/>
    <property type="project" value="UniProtKB-SubCell"/>
</dbReference>
<dbReference type="GO" id="GO:0008254">
    <property type="term" value="F:3'-nucleotidase activity"/>
    <property type="evidence" value="ECO:0007669"/>
    <property type="project" value="UniProtKB-UniRule"/>
</dbReference>
<dbReference type="GO" id="GO:0008253">
    <property type="term" value="F:5'-nucleotidase activity"/>
    <property type="evidence" value="ECO:0007669"/>
    <property type="project" value="UniProtKB-UniRule"/>
</dbReference>
<dbReference type="GO" id="GO:0004309">
    <property type="term" value="F:exopolyphosphatase activity"/>
    <property type="evidence" value="ECO:0007669"/>
    <property type="project" value="UniProtKB-UniRule"/>
</dbReference>
<dbReference type="GO" id="GO:0046872">
    <property type="term" value="F:metal ion binding"/>
    <property type="evidence" value="ECO:0007669"/>
    <property type="project" value="UniProtKB-UniRule"/>
</dbReference>
<dbReference type="GO" id="GO:0000166">
    <property type="term" value="F:nucleotide binding"/>
    <property type="evidence" value="ECO:0007669"/>
    <property type="project" value="UniProtKB-KW"/>
</dbReference>
<dbReference type="FunFam" id="3.40.1210.10:FF:000001">
    <property type="entry name" value="5'/3'-nucleotidase SurE"/>
    <property type="match status" value="1"/>
</dbReference>
<dbReference type="Gene3D" id="3.40.1210.10">
    <property type="entry name" value="Survival protein SurE-like phosphatase/nucleotidase"/>
    <property type="match status" value="1"/>
</dbReference>
<dbReference type="HAMAP" id="MF_00060">
    <property type="entry name" value="SurE"/>
    <property type="match status" value="1"/>
</dbReference>
<dbReference type="InterPro" id="IPR030048">
    <property type="entry name" value="SurE"/>
</dbReference>
<dbReference type="InterPro" id="IPR002828">
    <property type="entry name" value="SurE-like_Pase/nucleotidase"/>
</dbReference>
<dbReference type="InterPro" id="IPR036523">
    <property type="entry name" value="SurE-like_sf"/>
</dbReference>
<dbReference type="NCBIfam" id="NF001488">
    <property type="entry name" value="PRK00346.1-1"/>
    <property type="match status" value="1"/>
</dbReference>
<dbReference type="NCBIfam" id="NF001489">
    <property type="entry name" value="PRK00346.1-3"/>
    <property type="match status" value="1"/>
</dbReference>
<dbReference type="NCBIfam" id="NF001490">
    <property type="entry name" value="PRK00346.1-4"/>
    <property type="match status" value="1"/>
</dbReference>
<dbReference type="NCBIfam" id="TIGR00087">
    <property type="entry name" value="surE"/>
    <property type="match status" value="1"/>
</dbReference>
<dbReference type="PANTHER" id="PTHR30457">
    <property type="entry name" value="5'-NUCLEOTIDASE SURE"/>
    <property type="match status" value="1"/>
</dbReference>
<dbReference type="PANTHER" id="PTHR30457:SF12">
    <property type="entry name" value="5'_3'-NUCLEOTIDASE SURE"/>
    <property type="match status" value="1"/>
</dbReference>
<dbReference type="Pfam" id="PF01975">
    <property type="entry name" value="SurE"/>
    <property type="match status" value="1"/>
</dbReference>
<dbReference type="SUPFAM" id="SSF64167">
    <property type="entry name" value="SurE-like"/>
    <property type="match status" value="1"/>
</dbReference>
<sequence>MHILLSNDDGIHAPGIQQLAEALRTLAFVQIVAPDRDRSGVSNSLTLDAPLRMQTHPNGDIAILSGTPTDCVYLGVNALMRPGPDIVVSGINAGPNLGDDVIYSGTVAAAMEGRHLGYPALAVSLNGTRHFATAAAVTCRLLRALTSTPLRTGKILNVNVPDLPLSSLKGYKVTRCGSRHPASEVIRQTDPRGREMLWIGPPAGSFDAGADTDFDAVNRGYVSLTPLQVDLTASAALPVLSDWLGDTEGLGSW</sequence>
<keyword id="KW-0963">Cytoplasm</keyword>
<keyword id="KW-0378">Hydrolase</keyword>
<keyword id="KW-0479">Metal-binding</keyword>
<keyword id="KW-0547">Nucleotide-binding</keyword>
<reference key="1">
    <citation type="journal article" date="2006" name="Genome Res.">
        <title>Massive genome erosion and functional adaptations provide insights into the symbiotic lifestyle of Sodalis glossinidius in the tsetse host.</title>
        <authorList>
            <person name="Toh H."/>
            <person name="Weiss B.L."/>
            <person name="Perkin S.A.H."/>
            <person name="Yamashita A."/>
            <person name="Oshima K."/>
            <person name="Hattori M."/>
            <person name="Aksoy S."/>
        </authorList>
    </citation>
    <scope>NUCLEOTIDE SEQUENCE [LARGE SCALE GENOMIC DNA]</scope>
    <source>
        <strain>morsitans</strain>
    </source>
</reference>
<comment type="function">
    <text evidence="1">Nucleotidase with a broad substrate specificity as it can dephosphorylate various ribo- and deoxyribonucleoside 5'-monophosphates and ribonucleoside 3'-monophosphates with highest affinity to 3'-AMP. Also hydrolyzes polyphosphate (exopolyphosphatase activity) with the preference for short-chain-length substrates (P20-25). Might be involved in the regulation of dNTP and NTP pools, and in the turnover of 3'-mononucleotides produced by numerous intracellular RNases (T1, T2, and F) during the degradation of various RNAs.</text>
</comment>
<comment type="catalytic activity">
    <reaction evidence="1">
        <text>a ribonucleoside 5'-phosphate + H2O = a ribonucleoside + phosphate</text>
        <dbReference type="Rhea" id="RHEA:12484"/>
        <dbReference type="ChEBI" id="CHEBI:15377"/>
        <dbReference type="ChEBI" id="CHEBI:18254"/>
        <dbReference type="ChEBI" id="CHEBI:43474"/>
        <dbReference type="ChEBI" id="CHEBI:58043"/>
        <dbReference type="EC" id="3.1.3.5"/>
    </reaction>
</comment>
<comment type="catalytic activity">
    <reaction evidence="1">
        <text>a ribonucleoside 3'-phosphate + H2O = a ribonucleoside + phosphate</text>
        <dbReference type="Rhea" id="RHEA:10144"/>
        <dbReference type="ChEBI" id="CHEBI:13197"/>
        <dbReference type="ChEBI" id="CHEBI:15377"/>
        <dbReference type="ChEBI" id="CHEBI:18254"/>
        <dbReference type="ChEBI" id="CHEBI:43474"/>
        <dbReference type="EC" id="3.1.3.6"/>
    </reaction>
</comment>
<comment type="catalytic activity">
    <reaction evidence="1">
        <text>[phosphate](n) + H2O = [phosphate](n-1) + phosphate + H(+)</text>
        <dbReference type="Rhea" id="RHEA:21528"/>
        <dbReference type="Rhea" id="RHEA-COMP:9859"/>
        <dbReference type="Rhea" id="RHEA-COMP:14279"/>
        <dbReference type="ChEBI" id="CHEBI:15377"/>
        <dbReference type="ChEBI" id="CHEBI:15378"/>
        <dbReference type="ChEBI" id="CHEBI:16838"/>
        <dbReference type="ChEBI" id="CHEBI:43474"/>
        <dbReference type="EC" id="3.6.1.11"/>
    </reaction>
</comment>
<comment type="cofactor">
    <cofactor evidence="1">
        <name>a divalent metal cation</name>
        <dbReference type="ChEBI" id="CHEBI:60240"/>
    </cofactor>
    <text evidence="1">Binds 1 divalent metal cation per subunit.</text>
</comment>
<comment type="subcellular location">
    <subcellularLocation>
        <location evidence="1">Cytoplasm</location>
    </subcellularLocation>
</comment>
<comment type="similarity">
    <text evidence="1">Belongs to the SurE nucleotidase family.</text>
</comment>
<protein>
    <recommendedName>
        <fullName evidence="1">5'/3'-nucleotidase SurE</fullName>
        <ecNumber evidence="1">3.1.3.5</ecNumber>
        <ecNumber evidence="1">3.1.3.6</ecNumber>
    </recommendedName>
    <alternativeName>
        <fullName evidence="1">Exopolyphosphatase</fullName>
        <ecNumber evidence="1">3.6.1.11</ecNumber>
    </alternativeName>
    <alternativeName>
        <fullName evidence="1">Nucleoside monophosphate phosphohydrolase</fullName>
    </alternativeName>
</protein>
<evidence type="ECO:0000255" key="1">
    <source>
        <dbReference type="HAMAP-Rule" id="MF_00060"/>
    </source>
</evidence>
<accession>Q2NVM2</accession>